<protein>
    <recommendedName>
        <fullName evidence="1">Elongation factor 4</fullName>
        <shortName evidence="1">EF-4</shortName>
        <ecNumber evidence="1">3.6.5.n1</ecNumber>
    </recommendedName>
    <alternativeName>
        <fullName evidence="1">Ribosomal back-translocase LepA</fullName>
    </alternativeName>
</protein>
<organism>
    <name type="scientific">Baumannia cicadellinicola subsp. Homalodisca coagulata</name>
    <dbReference type="NCBI Taxonomy" id="374463"/>
    <lineage>
        <taxon>Bacteria</taxon>
        <taxon>Pseudomonadati</taxon>
        <taxon>Pseudomonadota</taxon>
        <taxon>Gammaproteobacteria</taxon>
        <taxon>Candidatus Palibaumannia</taxon>
    </lineage>
</organism>
<name>LEPA_BAUCH</name>
<comment type="function">
    <text evidence="1">Required for accurate and efficient protein synthesis under certain stress conditions. May act as a fidelity factor of the translation reaction, by catalyzing a one-codon backward translocation of tRNAs on improperly translocated ribosomes. Back-translocation proceeds from a post-translocation (POST) complex to a pre-translocation (PRE) complex, thus giving elongation factor G a second chance to translocate the tRNAs correctly. Binds to ribosomes in a GTP-dependent manner.</text>
</comment>
<comment type="catalytic activity">
    <reaction evidence="1">
        <text>GTP + H2O = GDP + phosphate + H(+)</text>
        <dbReference type="Rhea" id="RHEA:19669"/>
        <dbReference type="ChEBI" id="CHEBI:15377"/>
        <dbReference type="ChEBI" id="CHEBI:15378"/>
        <dbReference type="ChEBI" id="CHEBI:37565"/>
        <dbReference type="ChEBI" id="CHEBI:43474"/>
        <dbReference type="ChEBI" id="CHEBI:58189"/>
        <dbReference type="EC" id="3.6.5.n1"/>
    </reaction>
</comment>
<comment type="subcellular location">
    <subcellularLocation>
        <location evidence="1">Cell membrane</location>
        <topology evidence="1">Peripheral membrane protein</topology>
        <orientation evidence="1">Cytoplasmic side</orientation>
    </subcellularLocation>
</comment>
<comment type="similarity">
    <text evidence="1">Belongs to the TRAFAC class translation factor GTPase superfamily. Classic translation factor GTPase family. LepA subfamily.</text>
</comment>
<dbReference type="EC" id="3.6.5.n1" evidence="1"/>
<dbReference type="EMBL" id="CP000238">
    <property type="protein sequence ID" value="ABF13875.1"/>
    <property type="molecule type" value="Genomic_DNA"/>
</dbReference>
<dbReference type="RefSeq" id="WP_011520466.1">
    <property type="nucleotide sequence ID" value="NC_007984.1"/>
</dbReference>
<dbReference type="SMR" id="Q1LTI1"/>
<dbReference type="STRING" id="374463.BCI_0283"/>
<dbReference type="KEGG" id="bci:BCI_0283"/>
<dbReference type="HOGENOM" id="CLU_009995_3_3_6"/>
<dbReference type="OrthoDB" id="9804431at2"/>
<dbReference type="Proteomes" id="UP000002427">
    <property type="component" value="Chromosome"/>
</dbReference>
<dbReference type="GO" id="GO:0005886">
    <property type="term" value="C:plasma membrane"/>
    <property type="evidence" value="ECO:0007669"/>
    <property type="project" value="UniProtKB-SubCell"/>
</dbReference>
<dbReference type="GO" id="GO:0005525">
    <property type="term" value="F:GTP binding"/>
    <property type="evidence" value="ECO:0007669"/>
    <property type="project" value="UniProtKB-UniRule"/>
</dbReference>
<dbReference type="GO" id="GO:0003924">
    <property type="term" value="F:GTPase activity"/>
    <property type="evidence" value="ECO:0007669"/>
    <property type="project" value="UniProtKB-UniRule"/>
</dbReference>
<dbReference type="GO" id="GO:0097216">
    <property type="term" value="F:guanosine tetraphosphate binding"/>
    <property type="evidence" value="ECO:0007669"/>
    <property type="project" value="UniProtKB-ARBA"/>
</dbReference>
<dbReference type="GO" id="GO:0043022">
    <property type="term" value="F:ribosome binding"/>
    <property type="evidence" value="ECO:0007669"/>
    <property type="project" value="UniProtKB-UniRule"/>
</dbReference>
<dbReference type="GO" id="GO:0003746">
    <property type="term" value="F:translation elongation factor activity"/>
    <property type="evidence" value="ECO:0007669"/>
    <property type="project" value="UniProtKB-UniRule"/>
</dbReference>
<dbReference type="GO" id="GO:0045727">
    <property type="term" value="P:positive regulation of translation"/>
    <property type="evidence" value="ECO:0007669"/>
    <property type="project" value="UniProtKB-UniRule"/>
</dbReference>
<dbReference type="CDD" id="cd03699">
    <property type="entry name" value="EF4_II"/>
    <property type="match status" value="1"/>
</dbReference>
<dbReference type="CDD" id="cd16260">
    <property type="entry name" value="EF4_III"/>
    <property type="match status" value="1"/>
</dbReference>
<dbReference type="CDD" id="cd01890">
    <property type="entry name" value="LepA"/>
    <property type="match status" value="1"/>
</dbReference>
<dbReference type="CDD" id="cd03709">
    <property type="entry name" value="lepA_C"/>
    <property type="match status" value="1"/>
</dbReference>
<dbReference type="FunFam" id="3.40.50.300:FF:000078">
    <property type="entry name" value="Elongation factor 4"/>
    <property type="match status" value="1"/>
</dbReference>
<dbReference type="FunFam" id="2.40.30.10:FF:000015">
    <property type="entry name" value="Translation factor GUF1, mitochondrial"/>
    <property type="match status" value="1"/>
</dbReference>
<dbReference type="FunFam" id="3.30.70.240:FF:000007">
    <property type="entry name" value="Translation factor GUF1, mitochondrial"/>
    <property type="match status" value="1"/>
</dbReference>
<dbReference type="FunFam" id="3.30.70.2570:FF:000001">
    <property type="entry name" value="Translation factor GUF1, mitochondrial"/>
    <property type="match status" value="1"/>
</dbReference>
<dbReference type="FunFam" id="3.30.70.870:FF:000004">
    <property type="entry name" value="Translation factor GUF1, mitochondrial"/>
    <property type="match status" value="1"/>
</dbReference>
<dbReference type="Gene3D" id="3.30.70.240">
    <property type="match status" value="1"/>
</dbReference>
<dbReference type="Gene3D" id="3.30.70.2570">
    <property type="entry name" value="Elongation factor 4, C-terminal domain"/>
    <property type="match status" value="1"/>
</dbReference>
<dbReference type="Gene3D" id="3.30.70.870">
    <property type="entry name" value="Elongation Factor G (Translational Gtpase), domain 3"/>
    <property type="match status" value="1"/>
</dbReference>
<dbReference type="Gene3D" id="3.40.50.300">
    <property type="entry name" value="P-loop containing nucleotide triphosphate hydrolases"/>
    <property type="match status" value="1"/>
</dbReference>
<dbReference type="Gene3D" id="2.40.30.10">
    <property type="entry name" value="Translation factors"/>
    <property type="match status" value="1"/>
</dbReference>
<dbReference type="HAMAP" id="MF_00071">
    <property type="entry name" value="LepA"/>
    <property type="match status" value="1"/>
</dbReference>
<dbReference type="InterPro" id="IPR006297">
    <property type="entry name" value="EF-4"/>
</dbReference>
<dbReference type="InterPro" id="IPR035647">
    <property type="entry name" value="EFG_III/V"/>
</dbReference>
<dbReference type="InterPro" id="IPR000640">
    <property type="entry name" value="EFG_V-like"/>
</dbReference>
<dbReference type="InterPro" id="IPR004161">
    <property type="entry name" value="EFTu-like_2"/>
</dbReference>
<dbReference type="InterPro" id="IPR031157">
    <property type="entry name" value="G_TR_CS"/>
</dbReference>
<dbReference type="InterPro" id="IPR038363">
    <property type="entry name" value="LepA_C_sf"/>
</dbReference>
<dbReference type="InterPro" id="IPR013842">
    <property type="entry name" value="LepA_CTD"/>
</dbReference>
<dbReference type="InterPro" id="IPR035654">
    <property type="entry name" value="LepA_IV"/>
</dbReference>
<dbReference type="InterPro" id="IPR027417">
    <property type="entry name" value="P-loop_NTPase"/>
</dbReference>
<dbReference type="InterPro" id="IPR005225">
    <property type="entry name" value="Small_GTP-bd"/>
</dbReference>
<dbReference type="InterPro" id="IPR000795">
    <property type="entry name" value="T_Tr_GTP-bd_dom"/>
</dbReference>
<dbReference type="NCBIfam" id="TIGR01393">
    <property type="entry name" value="lepA"/>
    <property type="match status" value="1"/>
</dbReference>
<dbReference type="NCBIfam" id="TIGR00231">
    <property type="entry name" value="small_GTP"/>
    <property type="match status" value="1"/>
</dbReference>
<dbReference type="PANTHER" id="PTHR43512:SF4">
    <property type="entry name" value="TRANSLATION FACTOR GUF1 HOMOLOG, CHLOROPLASTIC"/>
    <property type="match status" value="1"/>
</dbReference>
<dbReference type="PANTHER" id="PTHR43512">
    <property type="entry name" value="TRANSLATION FACTOR GUF1-RELATED"/>
    <property type="match status" value="1"/>
</dbReference>
<dbReference type="Pfam" id="PF00679">
    <property type="entry name" value="EFG_C"/>
    <property type="match status" value="1"/>
</dbReference>
<dbReference type="Pfam" id="PF00009">
    <property type="entry name" value="GTP_EFTU"/>
    <property type="match status" value="1"/>
</dbReference>
<dbReference type="Pfam" id="PF03144">
    <property type="entry name" value="GTP_EFTU_D2"/>
    <property type="match status" value="1"/>
</dbReference>
<dbReference type="Pfam" id="PF06421">
    <property type="entry name" value="LepA_C"/>
    <property type="match status" value="1"/>
</dbReference>
<dbReference type="PRINTS" id="PR00315">
    <property type="entry name" value="ELONGATNFCT"/>
</dbReference>
<dbReference type="SUPFAM" id="SSF54980">
    <property type="entry name" value="EF-G C-terminal domain-like"/>
    <property type="match status" value="2"/>
</dbReference>
<dbReference type="SUPFAM" id="SSF52540">
    <property type="entry name" value="P-loop containing nucleoside triphosphate hydrolases"/>
    <property type="match status" value="1"/>
</dbReference>
<dbReference type="PROSITE" id="PS00301">
    <property type="entry name" value="G_TR_1"/>
    <property type="match status" value="1"/>
</dbReference>
<dbReference type="PROSITE" id="PS51722">
    <property type="entry name" value="G_TR_2"/>
    <property type="match status" value="1"/>
</dbReference>
<evidence type="ECO:0000255" key="1">
    <source>
        <dbReference type="HAMAP-Rule" id="MF_00071"/>
    </source>
</evidence>
<reference key="1">
    <citation type="journal article" date="2006" name="PLoS Biol.">
        <title>Metabolic complementarity and genomics of the dual bacterial symbiosis of sharpshooters.</title>
        <authorList>
            <person name="Wu D."/>
            <person name="Daugherty S.C."/>
            <person name="Van Aken S.E."/>
            <person name="Pai G.H."/>
            <person name="Watkins K.L."/>
            <person name="Khouri H."/>
            <person name="Tallon L.J."/>
            <person name="Zaborsky J.M."/>
            <person name="Dunbar H.E."/>
            <person name="Tran P.L."/>
            <person name="Moran N.A."/>
            <person name="Eisen J.A."/>
        </authorList>
    </citation>
    <scope>NUCLEOTIDE SEQUENCE [LARGE SCALE GENOMIC DNA]</scope>
</reference>
<sequence length="602" mass="67796">MKKIRNFAIIAHIDHGKSTLSDRFIQLCGALSSREMVNQVLDSMDIERERGITIKAQSVRLNYKALDSQLYQLNLIDTPGHVDFSYEVSRSLAACEGALLVVDASQGVEAQTLANCYTAIEMNLTVVPVINKIDLASADPNRVLQEIEDIIGIDATDIVFCSAKTGLGISNIIERIVRDIPPPKGDPTAPLQALIIDSWFDNYFGLVSLVRIQNGTLRKGDKVTVMSTGQSYNVERLGFFTPKKIDQEELKCGEVGWLVCSIKNIFGVLVGDTFTLTYQPAQQALPGFKKVKPQVYAGFFPVNANDYQSLNDALGKLRLNDASLFYEIEQSNALGFGFRCGFLGLLHMEIIQERLEREYNLNLITTAPTVIYEVITHDKNTYFIDSPSKLPSIHEIKELREPIAKCTILVPHKYLGKVINLCIEKRGVQKDIFYHGKMVTLTYEIPMAEVVIDFFDRLKSISRGYASLDYEFQFFQTSNVVRVDVLINGDRIDALTIITHRVNALYRGRELVDRLQELIPRQQFDIAIQTAIGNNIIARSTVKQLRKNVLAKCYGGDVSRKKKLLQKQKQGKKRMKLIGKIELPQEAFMSILNVKKKSNKVC</sequence>
<accession>Q1LTI1</accession>
<gene>
    <name evidence="1" type="primary">lepA</name>
    <name type="ordered locus">BCI_0283</name>
</gene>
<keyword id="KW-1003">Cell membrane</keyword>
<keyword id="KW-0342">GTP-binding</keyword>
<keyword id="KW-0378">Hydrolase</keyword>
<keyword id="KW-0472">Membrane</keyword>
<keyword id="KW-0547">Nucleotide-binding</keyword>
<keyword id="KW-0648">Protein biosynthesis</keyword>
<keyword id="KW-1185">Reference proteome</keyword>
<feature type="chain" id="PRO_0000265639" description="Elongation factor 4">
    <location>
        <begin position="1"/>
        <end position="602"/>
    </location>
</feature>
<feature type="domain" description="tr-type G">
    <location>
        <begin position="2"/>
        <end position="184"/>
    </location>
</feature>
<feature type="binding site" evidence="1">
    <location>
        <begin position="14"/>
        <end position="19"/>
    </location>
    <ligand>
        <name>GTP</name>
        <dbReference type="ChEBI" id="CHEBI:37565"/>
    </ligand>
</feature>
<feature type="binding site" evidence="1">
    <location>
        <begin position="131"/>
        <end position="134"/>
    </location>
    <ligand>
        <name>GTP</name>
        <dbReference type="ChEBI" id="CHEBI:37565"/>
    </ligand>
</feature>
<proteinExistence type="inferred from homology"/>